<gene>
    <name type="primary">PME45</name>
    <name type="synonym">ARATH45</name>
    <name type="ordered locus">At4g33230</name>
    <name type="ORF">F4I10.160</name>
</gene>
<keyword id="KW-0063">Aspartyl esterase</keyword>
<keyword id="KW-1015">Disulfide bond</keyword>
<keyword id="KW-0325">Glycoprotein</keyword>
<keyword id="KW-0378">Hydrolase</keyword>
<keyword id="KW-0472">Membrane</keyword>
<keyword id="KW-1185">Reference proteome</keyword>
<keyword id="KW-0812">Transmembrane</keyword>
<keyword id="KW-1133">Transmembrane helix</keyword>
<feature type="chain" id="PRO_0000371694" description="Putative pectinesterase/pectinesterase inhibitor 45">
    <location>
        <begin position="1"/>
        <end position="609"/>
    </location>
</feature>
<feature type="transmembrane region" description="Helical" evidence="2">
    <location>
        <begin position="25"/>
        <end position="45"/>
    </location>
</feature>
<feature type="region of interest" description="Disordered" evidence="4">
    <location>
        <begin position="54"/>
        <end position="87"/>
    </location>
</feature>
<feature type="region of interest" description="Pectinesterase inhibitor 45">
    <location>
        <begin position="89"/>
        <end position="241"/>
    </location>
</feature>
<feature type="region of interest" description="Pectinesterase 45">
    <location>
        <begin position="296"/>
        <end position="593"/>
    </location>
</feature>
<feature type="active site" description="Proton donor; for pectinesterase activity" evidence="3">
    <location>
        <position position="424"/>
    </location>
</feature>
<feature type="active site" description="Nucleophile; for pectinesterase activity" evidence="3">
    <location>
        <position position="445"/>
    </location>
</feature>
<feature type="binding site" evidence="1">
    <location>
        <position position="371"/>
    </location>
    <ligand>
        <name>substrate</name>
        <note>for pectinesterase activity</note>
    </ligand>
</feature>
<feature type="binding site" evidence="1">
    <location>
        <position position="401"/>
    </location>
    <ligand>
        <name>substrate</name>
        <note>for pectinesterase activity</note>
    </ligand>
</feature>
<feature type="binding site" evidence="1">
    <location>
        <position position="513"/>
    </location>
    <ligand>
        <name>substrate</name>
        <note>for pectinesterase activity</note>
    </ligand>
</feature>
<feature type="binding site" evidence="1">
    <location>
        <position position="515"/>
    </location>
    <ligand>
        <name>substrate</name>
        <note>for pectinesterase activity</note>
    </ligand>
</feature>
<feature type="site" description="Transition state stabilizer" evidence="1">
    <location>
        <position position="423"/>
    </location>
</feature>
<feature type="glycosylation site" description="N-linked (GlcNAc...) asparagine" evidence="2">
    <location>
        <position position="51"/>
    </location>
</feature>
<feature type="glycosylation site" description="N-linked (GlcNAc...) asparagine" evidence="2">
    <location>
        <position position="62"/>
    </location>
</feature>
<feature type="glycosylation site" description="N-linked (GlcNAc...) asparagine" evidence="2">
    <location>
        <position position="100"/>
    </location>
</feature>
<feature type="glycosylation site" description="N-linked (GlcNAc...) asparagine" evidence="2">
    <location>
        <position position="114"/>
    </location>
</feature>
<feature type="glycosylation site" description="N-linked (GlcNAc...) asparagine" evidence="2">
    <location>
        <position position="183"/>
    </location>
</feature>
<feature type="glycosylation site" description="N-linked (GlcNAc...) asparagine" evidence="2">
    <location>
        <position position="229"/>
    </location>
</feature>
<feature type="glycosylation site" description="N-linked (GlcNAc...) asparagine" evidence="2">
    <location>
        <position position="296"/>
    </location>
</feature>
<feature type="glycosylation site" description="N-linked (GlcNAc...) asparagine" evidence="2">
    <location>
        <position position="306"/>
    </location>
</feature>
<feature type="glycosylation site" description="N-linked (GlcNAc...) asparagine" evidence="2">
    <location>
        <position position="346"/>
    </location>
</feature>
<feature type="glycosylation site" description="N-linked (GlcNAc...) asparagine" evidence="2">
    <location>
        <position position="362"/>
    </location>
</feature>
<feature type="glycosylation site" description="N-linked (GlcNAc...) asparagine" evidence="2">
    <location>
        <position position="491"/>
    </location>
</feature>
<feature type="disulfide bond" evidence="1">
    <location>
        <begin position="438"/>
        <end position="458"/>
    </location>
</feature>
<proteinExistence type="evidence at transcript level"/>
<sequence length="609" mass="67742">MAFQDFDKIQERVNAERKRKFRKRIILGVVSVLVVAAAIIGGAFAYVTYENKTQEQGKTTNNKSKDSPTKSESPSPKPPSSAAQTVKAGQVDKIIQTLCNSTLYKPTCQNTLKNETKKDTPQTDPRSLLKSAIVAVNDDLDQVFKRVLSLKTENKDDKDAIAQCKLLVDEAKEELGTSMKRINDSEVNNFAKIVPDLDSWLSAVMSYQETCVDGFEEGKLKTEIRKNFNSSQVLTSNSLAMIKSLDGYLSSVPKVKTRLLLEARSSAKETDHITSWLSNKERRMLKAVDVKALKPNATVAKDGSGNFTTINAALKAMPAKYQGRYTIYIKHGIYDESVIIDKKKPNVTMVGDGSQKTIVTGNKSHAKKIRTFLTATFVAQGEGFMAQSMGFRNTAGPEGHQAVAIRVQSDRSVFLNCRFEGYQDTLYAYTHRQYYRSCVIIGTVDFIFGDAAAIFQNCDIFIRKGLPGQKNTVTAQGRVDKFQTTGFVIHNCTVAPNEDLKPVKAQFKSYLGRPWKPHSRTVVMESTIEDVIDPVGWLRWQETDFAIDTLSYAEYKNDGPSGATAARVKWPGFRVLNKEEAMKFTVGPFLQGEWIQAIGSPVKLGLYDA</sequence>
<protein>
    <recommendedName>
        <fullName>Putative pectinesterase/pectinesterase inhibitor 45</fullName>
    </recommendedName>
    <domain>
        <recommendedName>
            <fullName>Pectinesterase inhibitor 45</fullName>
        </recommendedName>
        <alternativeName>
            <fullName>Pectin methylesterase inhibitor 45</fullName>
        </alternativeName>
    </domain>
    <domain>
        <recommendedName>
            <fullName>Pectinesterase 45</fullName>
            <shortName>PE 45</shortName>
            <ecNumber>3.1.1.11</ecNumber>
        </recommendedName>
        <alternativeName>
            <fullName>Pectin methylesterase 45</fullName>
            <shortName>AtPME45</shortName>
        </alternativeName>
    </domain>
</protein>
<dbReference type="EC" id="3.1.1.11"/>
<dbReference type="EMBL" id="AL035525">
    <property type="protein sequence ID" value="CAB36797.1"/>
    <property type="molecule type" value="Genomic_DNA"/>
</dbReference>
<dbReference type="EMBL" id="AL161583">
    <property type="protein sequence ID" value="CAB80040.1"/>
    <property type="molecule type" value="Genomic_DNA"/>
</dbReference>
<dbReference type="EMBL" id="CP002687">
    <property type="protein sequence ID" value="AEE86193.1"/>
    <property type="molecule type" value="Genomic_DNA"/>
</dbReference>
<dbReference type="PIR" id="T05203">
    <property type="entry name" value="T05203"/>
</dbReference>
<dbReference type="RefSeq" id="NP_195049.1">
    <property type="nucleotide sequence ID" value="NM_119477.2"/>
</dbReference>
<dbReference type="SMR" id="Q9SMY6"/>
<dbReference type="FunCoup" id="Q9SMY6">
    <property type="interactions" value="97"/>
</dbReference>
<dbReference type="STRING" id="3702.Q9SMY6"/>
<dbReference type="GlyCosmos" id="Q9SMY6">
    <property type="glycosylation" value="11 sites, No reported glycans"/>
</dbReference>
<dbReference type="GlyGen" id="Q9SMY6">
    <property type="glycosylation" value="11 sites"/>
</dbReference>
<dbReference type="iPTMnet" id="Q9SMY6"/>
<dbReference type="PaxDb" id="3702-AT4G33230.1"/>
<dbReference type="ProteomicsDB" id="234686"/>
<dbReference type="EnsemblPlants" id="AT4G33230.1">
    <property type="protein sequence ID" value="AT4G33230.1"/>
    <property type="gene ID" value="AT4G33230"/>
</dbReference>
<dbReference type="GeneID" id="829459"/>
<dbReference type="Gramene" id="AT4G33230.1">
    <property type="protein sequence ID" value="AT4G33230.1"/>
    <property type="gene ID" value="AT4G33230"/>
</dbReference>
<dbReference type="KEGG" id="ath:AT4G33230"/>
<dbReference type="Araport" id="AT4G33230"/>
<dbReference type="TAIR" id="AT4G33230"/>
<dbReference type="eggNOG" id="ENOG502QSQ4">
    <property type="taxonomic scope" value="Eukaryota"/>
</dbReference>
<dbReference type="HOGENOM" id="CLU_012243_9_1_1"/>
<dbReference type="InParanoid" id="Q9SMY6"/>
<dbReference type="OMA" id="FLQGEWI"/>
<dbReference type="PhylomeDB" id="Q9SMY6"/>
<dbReference type="BioCyc" id="ARA:AT4G33230-MONOMER"/>
<dbReference type="BRENDA" id="3.1.1.11">
    <property type="organism ID" value="399"/>
</dbReference>
<dbReference type="UniPathway" id="UPA00545">
    <property type="reaction ID" value="UER00823"/>
</dbReference>
<dbReference type="PRO" id="PR:Q9SMY6"/>
<dbReference type="Proteomes" id="UP000006548">
    <property type="component" value="Chromosome 4"/>
</dbReference>
<dbReference type="ExpressionAtlas" id="Q9SMY6">
    <property type="expression patterns" value="baseline and differential"/>
</dbReference>
<dbReference type="GO" id="GO:0016020">
    <property type="term" value="C:membrane"/>
    <property type="evidence" value="ECO:0007669"/>
    <property type="project" value="UniProtKB-SubCell"/>
</dbReference>
<dbReference type="GO" id="GO:0004857">
    <property type="term" value="F:enzyme inhibitor activity"/>
    <property type="evidence" value="ECO:0007669"/>
    <property type="project" value="InterPro"/>
</dbReference>
<dbReference type="GO" id="GO:0030599">
    <property type="term" value="F:pectinesterase activity"/>
    <property type="evidence" value="ECO:0007669"/>
    <property type="project" value="UniProtKB-EC"/>
</dbReference>
<dbReference type="GO" id="GO:0042545">
    <property type="term" value="P:cell wall modification"/>
    <property type="evidence" value="ECO:0007669"/>
    <property type="project" value="InterPro"/>
</dbReference>
<dbReference type="GO" id="GO:0045490">
    <property type="term" value="P:pectin catabolic process"/>
    <property type="evidence" value="ECO:0007669"/>
    <property type="project" value="UniProtKB-UniPathway"/>
</dbReference>
<dbReference type="CDD" id="cd15798">
    <property type="entry name" value="PMEI-like_3"/>
    <property type="match status" value="1"/>
</dbReference>
<dbReference type="FunFam" id="1.20.140.40:FF:000001">
    <property type="entry name" value="Pectinesterase"/>
    <property type="match status" value="1"/>
</dbReference>
<dbReference type="FunFam" id="2.160.20.10:FF:000001">
    <property type="entry name" value="Pectinesterase"/>
    <property type="match status" value="1"/>
</dbReference>
<dbReference type="Gene3D" id="1.20.140.40">
    <property type="entry name" value="Invertase/pectin methylesterase inhibitor family protein"/>
    <property type="match status" value="1"/>
</dbReference>
<dbReference type="Gene3D" id="2.160.20.10">
    <property type="entry name" value="Single-stranded right-handed beta-helix, Pectin lyase-like"/>
    <property type="match status" value="1"/>
</dbReference>
<dbReference type="InterPro" id="IPR035513">
    <property type="entry name" value="Invertase/methylesterase_inhib"/>
</dbReference>
<dbReference type="InterPro" id="IPR012334">
    <property type="entry name" value="Pectin_lyas_fold"/>
</dbReference>
<dbReference type="InterPro" id="IPR011050">
    <property type="entry name" value="Pectin_lyase_fold/virulence"/>
</dbReference>
<dbReference type="InterPro" id="IPR033131">
    <property type="entry name" value="Pectinesterase_Asp_AS"/>
</dbReference>
<dbReference type="InterPro" id="IPR000070">
    <property type="entry name" value="Pectinesterase_cat"/>
</dbReference>
<dbReference type="InterPro" id="IPR006501">
    <property type="entry name" value="Pectinesterase_inhib_dom"/>
</dbReference>
<dbReference type="NCBIfam" id="TIGR01614">
    <property type="entry name" value="PME_inhib"/>
    <property type="match status" value="1"/>
</dbReference>
<dbReference type="PANTHER" id="PTHR31707">
    <property type="entry name" value="PECTINESTERASE"/>
    <property type="match status" value="1"/>
</dbReference>
<dbReference type="Pfam" id="PF01095">
    <property type="entry name" value="Pectinesterase"/>
    <property type="match status" value="1"/>
</dbReference>
<dbReference type="Pfam" id="PF04043">
    <property type="entry name" value="PMEI"/>
    <property type="match status" value="1"/>
</dbReference>
<dbReference type="SMART" id="SM00856">
    <property type="entry name" value="PMEI"/>
    <property type="match status" value="1"/>
</dbReference>
<dbReference type="SUPFAM" id="SSF51126">
    <property type="entry name" value="Pectin lyase-like"/>
    <property type="match status" value="1"/>
</dbReference>
<dbReference type="SUPFAM" id="SSF101148">
    <property type="entry name" value="Plant invertase/pectin methylesterase inhibitor"/>
    <property type="match status" value="1"/>
</dbReference>
<dbReference type="PROSITE" id="PS00503">
    <property type="entry name" value="PECTINESTERASE_2"/>
    <property type="match status" value="1"/>
</dbReference>
<name>PME45_ARATH</name>
<organism>
    <name type="scientific">Arabidopsis thaliana</name>
    <name type="common">Mouse-ear cress</name>
    <dbReference type="NCBI Taxonomy" id="3702"/>
    <lineage>
        <taxon>Eukaryota</taxon>
        <taxon>Viridiplantae</taxon>
        <taxon>Streptophyta</taxon>
        <taxon>Embryophyta</taxon>
        <taxon>Tracheophyta</taxon>
        <taxon>Spermatophyta</taxon>
        <taxon>Magnoliopsida</taxon>
        <taxon>eudicotyledons</taxon>
        <taxon>Gunneridae</taxon>
        <taxon>Pentapetalae</taxon>
        <taxon>rosids</taxon>
        <taxon>malvids</taxon>
        <taxon>Brassicales</taxon>
        <taxon>Brassicaceae</taxon>
        <taxon>Camelineae</taxon>
        <taxon>Arabidopsis</taxon>
    </lineage>
</organism>
<reference key="1">
    <citation type="journal article" date="1999" name="Nature">
        <title>Sequence and analysis of chromosome 4 of the plant Arabidopsis thaliana.</title>
        <authorList>
            <person name="Mayer K.F.X."/>
            <person name="Schueller C."/>
            <person name="Wambutt R."/>
            <person name="Murphy G."/>
            <person name="Volckaert G."/>
            <person name="Pohl T."/>
            <person name="Duesterhoeft A."/>
            <person name="Stiekema W."/>
            <person name="Entian K.-D."/>
            <person name="Terryn N."/>
            <person name="Harris B."/>
            <person name="Ansorge W."/>
            <person name="Brandt P."/>
            <person name="Grivell L.A."/>
            <person name="Rieger M."/>
            <person name="Weichselgartner M."/>
            <person name="de Simone V."/>
            <person name="Obermaier B."/>
            <person name="Mache R."/>
            <person name="Mueller M."/>
            <person name="Kreis M."/>
            <person name="Delseny M."/>
            <person name="Puigdomenech P."/>
            <person name="Watson M."/>
            <person name="Schmidtheini T."/>
            <person name="Reichert B."/>
            <person name="Portetelle D."/>
            <person name="Perez-Alonso M."/>
            <person name="Boutry M."/>
            <person name="Bancroft I."/>
            <person name="Vos P."/>
            <person name="Hoheisel J."/>
            <person name="Zimmermann W."/>
            <person name="Wedler H."/>
            <person name="Ridley P."/>
            <person name="Langham S.-A."/>
            <person name="McCullagh B."/>
            <person name="Bilham L."/>
            <person name="Robben J."/>
            <person name="van der Schueren J."/>
            <person name="Grymonprez B."/>
            <person name="Chuang Y.-J."/>
            <person name="Vandenbussche F."/>
            <person name="Braeken M."/>
            <person name="Weltjens I."/>
            <person name="Voet M."/>
            <person name="Bastiaens I."/>
            <person name="Aert R."/>
            <person name="Defoor E."/>
            <person name="Weitzenegger T."/>
            <person name="Bothe G."/>
            <person name="Ramsperger U."/>
            <person name="Hilbert H."/>
            <person name="Braun M."/>
            <person name="Holzer E."/>
            <person name="Brandt A."/>
            <person name="Peters S."/>
            <person name="van Staveren M."/>
            <person name="Dirkse W."/>
            <person name="Mooijman P."/>
            <person name="Klein Lankhorst R."/>
            <person name="Rose M."/>
            <person name="Hauf J."/>
            <person name="Koetter P."/>
            <person name="Berneiser S."/>
            <person name="Hempel S."/>
            <person name="Feldpausch M."/>
            <person name="Lamberth S."/>
            <person name="Van den Daele H."/>
            <person name="De Keyser A."/>
            <person name="Buysshaert C."/>
            <person name="Gielen J."/>
            <person name="Villarroel R."/>
            <person name="De Clercq R."/>
            <person name="van Montagu M."/>
            <person name="Rogers J."/>
            <person name="Cronin A."/>
            <person name="Quail M.A."/>
            <person name="Bray-Allen S."/>
            <person name="Clark L."/>
            <person name="Doggett J."/>
            <person name="Hall S."/>
            <person name="Kay M."/>
            <person name="Lennard N."/>
            <person name="McLay K."/>
            <person name="Mayes R."/>
            <person name="Pettett A."/>
            <person name="Rajandream M.A."/>
            <person name="Lyne M."/>
            <person name="Benes V."/>
            <person name="Rechmann S."/>
            <person name="Borkova D."/>
            <person name="Bloecker H."/>
            <person name="Scharfe M."/>
            <person name="Grimm M."/>
            <person name="Loehnert T.-H."/>
            <person name="Dose S."/>
            <person name="de Haan M."/>
            <person name="Maarse A.C."/>
            <person name="Schaefer M."/>
            <person name="Mueller-Auer S."/>
            <person name="Gabel C."/>
            <person name="Fuchs M."/>
            <person name="Fartmann B."/>
            <person name="Granderath K."/>
            <person name="Dauner D."/>
            <person name="Herzl A."/>
            <person name="Neumann S."/>
            <person name="Argiriou A."/>
            <person name="Vitale D."/>
            <person name="Liguori R."/>
            <person name="Piravandi E."/>
            <person name="Massenet O."/>
            <person name="Quigley F."/>
            <person name="Clabauld G."/>
            <person name="Muendlein A."/>
            <person name="Felber R."/>
            <person name="Schnabl S."/>
            <person name="Hiller R."/>
            <person name="Schmidt W."/>
            <person name="Lecharny A."/>
            <person name="Aubourg S."/>
            <person name="Chefdor F."/>
            <person name="Cooke R."/>
            <person name="Berger C."/>
            <person name="Monfort A."/>
            <person name="Casacuberta E."/>
            <person name="Gibbons T."/>
            <person name="Weber N."/>
            <person name="Vandenbol M."/>
            <person name="Bargues M."/>
            <person name="Terol J."/>
            <person name="Torres A."/>
            <person name="Perez-Perez A."/>
            <person name="Purnelle B."/>
            <person name="Bent E."/>
            <person name="Johnson S."/>
            <person name="Tacon D."/>
            <person name="Jesse T."/>
            <person name="Heijnen L."/>
            <person name="Schwarz S."/>
            <person name="Scholler P."/>
            <person name="Heber S."/>
            <person name="Francs P."/>
            <person name="Bielke C."/>
            <person name="Frishman D."/>
            <person name="Haase D."/>
            <person name="Lemcke K."/>
            <person name="Mewes H.-W."/>
            <person name="Stocker S."/>
            <person name="Zaccaria P."/>
            <person name="Bevan M."/>
            <person name="Wilson R.K."/>
            <person name="de la Bastide M."/>
            <person name="Habermann K."/>
            <person name="Parnell L."/>
            <person name="Dedhia N."/>
            <person name="Gnoj L."/>
            <person name="Schutz K."/>
            <person name="Huang E."/>
            <person name="Spiegel L."/>
            <person name="Sekhon M."/>
            <person name="Murray J."/>
            <person name="Sheet P."/>
            <person name="Cordes M."/>
            <person name="Abu-Threideh J."/>
            <person name="Stoneking T."/>
            <person name="Kalicki J."/>
            <person name="Graves T."/>
            <person name="Harmon G."/>
            <person name="Edwards J."/>
            <person name="Latreille P."/>
            <person name="Courtney L."/>
            <person name="Cloud J."/>
            <person name="Abbott A."/>
            <person name="Scott K."/>
            <person name="Johnson D."/>
            <person name="Minx P."/>
            <person name="Bentley D."/>
            <person name="Fulton B."/>
            <person name="Miller N."/>
            <person name="Greco T."/>
            <person name="Kemp K."/>
            <person name="Kramer J."/>
            <person name="Fulton L."/>
            <person name="Mardis E."/>
            <person name="Dante M."/>
            <person name="Pepin K."/>
            <person name="Hillier L.W."/>
            <person name="Nelson J."/>
            <person name="Spieth J."/>
            <person name="Ryan E."/>
            <person name="Andrews S."/>
            <person name="Geisel C."/>
            <person name="Layman D."/>
            <person name="Du H."/>
            <person name="Ali J."/>
            <person name="Berghoff A."/>
            <person name="Jones K."/>
            <person name="Drone K."/>
            <person name="Cotton M."/>
            <person name="Joshu C."/>
            <person name="Antonoiu B."/>
            <person name="Zidanic M."/>
            <person name="Strong C."/>
            <person name="Sun H."/>
            <person name="Lamar B."/>
            <person name="Yordan C."/>
            <person name="Ma P."/>
            <person name="Zhong J."/>
            <person name="Preston R."/>
            <person name="Vil D."/>
            <person name="Shekher M."/>
            <person name="Matero A."/>
            <person name="Shah R."/>
            <person name="Swaby I.K."/>
            <person name="O'Shaughnessy A."/>
            <person name="Rodriguez M."/>
            <person name="Hoffman J."/>
            <person name="Till S."/>
            <person name="Granat S."/>
            <person name="Shohdy N."/>
            <person name="Hasegawa A."/>
            <person name="Hameed A."/>
            <person name="Lodhi M."/>
            <person name="Johnson A."/>
            <person name="Chen E."/>
            <person name="Marra M.A."/>
            <person name="Martienssen R."/>
            <person name="McCombie W.R."/>
        </authorList>
    </citation>
    <scope>NUCLEOTIDE SEQUENCE [LARGE SCALE GENOMIC DNA]</scope>
    <source>
        <strain>cv. Columbia</strain>
    </source>
</reference>
<reference key="2">
    <citation type="journal article" date="2017" name="Plant J.">
        <title>Araport11: a complete reannotation of the Arabidopsis thaliana reference genome.</title>
        <authorList>
            <person name="Cheng C.Y."/>
            <person name="Krishnakumar V."/>
            <person name="Chan A.P."/>
            <person name="Thibaud-Nissen F."/>
            <person name="Schobel S."/>
            <person name="Town C.D."/>
        </authorList>
    </citation>
    <scope>GENOME REANNOTATION</scope>
    <source>
        <strain>cv. Columbia</strain>
    </source>
</reference>
<reference key="3">
    <citation type="journal article" date="2003" name="Plant Physiol.">
        <title>Transcriptional profiling of Arabidopsis tissues reveals the unique characteristics of the pollen transcriptome.</title>
        <authorList>
            <person name="Becker J.D."/>
            <person name="Boavida L.C."/>
            <person name="Carneiro J."/>
            <person name="Haury M."/>
            <person name="Feijo J.A."/>
        </authorList>
    </citation>
    <scope>TISSUE SPECIFICITY</scope>
</reference>
<reference key="4">
    <citation type="journal article" date="2004" name="Carbohydr. Res.">
        <title>Pectin methylesterases: sequence-structural features and phylogenetic relationships.</title>
        <authorList>
            <person name="Markovic O."/>
            <person name="Janecek S."/>
        </authorList>
    </citation>
    <scope>GENE FAMILY</scope>
    <scope>NOMENCLATURE</scope>
</reference>
<reference key="5">
    <citation type="journal article" date="2006" name="Planta">
        <title>Comprehensive expression profiling of the pectin methylesterase gene family during silique development in Arabidopsis thaliana.</title>
        <authorList>
            <person name="Louvet R."/>
            <person name="Cavel E."/>
            <person name="Gutierrez L."/>
            <person name="Guenin S."/>
            <person name="Roger D."/>
            <person name="Gillet F."/>
            <person name="Guerineau F."/>
            <person name="Pelloux J."/>
        </authorList>
    </citation>
    <scope>TISSUE SPECIFICITY</scope>
    <scope>DEVELOPMENTAL STAGE</scope>
</reference>
<accession>Q9SMY6</accession>
<comment type="function">
    <text evidence="1">Acts in the modification of cell walls via demethylesterification of cell wall pectin.</text>
</comment>
<comment type="catalytic activity">
    <reaction>
        <text>[(1-&gt;4)-alpha-D-galacturonosyl methyl ester](n) + n H2O = [(1-&gt;4)-alpha-D-galacturonosyl](n) + n methanol + n H(+)</text>
        <dbReference type="Rhea" id="RHEA:22380"/>
        <dbReference type="Rhea" id="RHEA-COMP:14570"/>
        <dbReference type="Rhea" id="RHEA-COMP:14573"/>
        <dbReference type="ChEBI" id="CHEBI:15377"/>
        <dbReference type="ChEBI" id="CHEBI:15378"/>
        <dbReference type="ChEBI" id="CHEBI:17790"/>
        <dbReference type="ChEBI" id="CHEBI:140522"/>
        <dbReference type="ChEBI" id="CHEBI:140523"/>
        <dbReference type="EC" id="3.1.1.11"/>
    </reaction>
</comment>
<comment type="pathway">
    <text>Glycan metabolism; pectin degradation; 2-dehydro-3-deoxy-D-gluconate from pectin: step 1/5.</text>
</comment>
<comment type="subcellular location">
    <subcellularLocation>
        <location evidence="7">Membrane</location>
        <topology evidence="7">Single-pass membrane protein</topology>
    </subcellularLocation>
</comment>
<comment type="tissue specificity">
    <text evidence="5 6">Expressed in flower buds and pollen.</text>
</comment>
<comment type="miscellaneous">
    <text>The PMEI region may act as an autoinhibitory domain and prevent untimely PME activity during transport.</text>
</comment>
<comment type="similarity">
    <text evidence="7">In the N-terminal section; belongs to the PMEI family.</text>
</comment>
<comment type="similarity">
    <text evidence="7">In the C-terminal section; belongs to the pectinesterase family.</text>
</comment>
<evidence type="ECO:0000250" key="1"/>
<evidence type="ECO:0000255" key="2"/>
<evidence type="ECO:0000255" key="3">
    <source>
        <dbReference type="PROSITE-ProRule" id="PRU10040"/>
    </source>
</evidence>
<evidence type="ECO:0000256" key="4">
    <source>
        <dbReference type="SAM" id="MobiDB-lite"/>
    </source>
</evidence>
<evidence type="ECO:0000269" key="5">
    <source>
    </source>
</evidence>
<evidence type="ECO:0000269" key="6">
    <source>
    </source>
</evidence>
<evidence type="ECO:0000305" key="7"/>